<proteinExistence type="evidence at protein level"/>
<keyword id="KW-0012">Acyltransferase</keyword>
<keyword id="KW-0444">Lipid biosynthesis</keyword>
<keyword id="KW-0443">Lipid metabolism</keyword>
<keyword id="KW-0472">Membrane</keyword>
<keyword id="KW-0594">Phospholipid biosynthesis</keyword>
<keyword id="KW-1208">Phospholipid metabolism</keyword>
<keyword id="KW-1185">Reference proteome</keyword>
<keyword id="KW-0808">Transferase</keyword>
<keyword id="KW-0812">Transmembrane</keyword>
<keyword id="KW-1133">Transmembrane helix</keyword>
<reference key="1">
    <citation type="journal article" date="1998" name="DNA Res.">
        <title>Structural analysis of Arabidopsis thaliana chromosome 5. VII. Sequence features of the regions of 1,013,767 bp covered by sixteen physically assigned P1 and TAC clones.</title>
        <authorList>
            <person name="Nakamura Y."/>
            <person name="Sato S."/>
            <person name="Asamizu E."/>
            <person name="Kaneko T."/>
            <person name="Kotani H."/>
            <person name="Miyajima N."/>
            <person name="Tabata S."/>
        </authorList>
    </citation>
    <scope>NUCLEOTIDE SEQUENCE [LARGE SCALE GENOMIC DNA]</scope>
    <source>
        <strain>cv. Columbia</strain>
    </source>
</reference>
<reference key="2">
    <citation type="journal article" date="2017" name="Plant J.">
        <title>Araport11: a complete reannotation of the Arabidopsis thaliana reference genome.</title>
        <authorList>
            <person name="Cheng C.Y."/>
            <person name="Krishnakumar V."/>
            <person name="Chan A.P."/>
            <person name="Thibaud-Nissen F."/>
            <person name="Schobel S."/>
            <person name="Town C.D."/>
        </authorList>
    </citation>
    <scope>GENOME REANNOTATION</scope>
    <source>
        <strain>cv. Columbia</strain>
    </source>
</reference>
<reference key="3">
    <citation type="journal article" date="2003" name="Science">
        <title>Empirical analysis of transcriptional activity in the Arabidopsis genome.</title>
        <authorList>
            <person name="Yamada K."/>
            <person name="Lim J."/>
            <person name="Dale J.M."/>
            <person name="Chen H."/>
            <person name="Shinn P."/>
            <person name="Palm C.J."/>
            <person name="Southwick A.M."/>
            <person name="Wu H.C."/>
            <person name="Kim C.J."/>
            <person name="Nguyen M."/>
            <person name="Pham P.K."/>
            <person name="Cheuk R.F."/>
            <person name="Karlin-Newmann G."/>
            <person name="Liu S.X."/>
            <person name="Lam B."/>
            <person name="Sakano H."/>
            <person name="Wu T."/>
            <person name="Yu G."/>
            <person name="Miranda M."/>
            <person name="Quach H.L."/>
            <person name="Tripp M."/>
            <person name="Chang C.H."/>
            <person name="Lee J.M."/>
            <person name="Toriumi M.J."/>
            <person name="Chan M.M."/>
            <person name="Tang C.C."/>
            <person name="Onodera C.S."/>
            <person name="Deng J.M."/>
            <person name="Akiyama K."/>
            <person name="Ansari Y."/>
            <person name="Arakawa T."/>
            <person name="Banh J."/>
            <person name="Banno F."/>
            <person name="Bowser L."/>
            <person name="Brooks S.Y."/>
            <person name="Carninci P."/>
            <person name="Chao Q."/>
            <person name="Choy N."/>
            <person name="Enju A."/>
            <person name="Goldsmith A.D."/>
            <person name="Gurjal M."/>
            <person name="Hansen N.F."/>
            <person name="Hayashizaki Y."/>
            <person name="Johnson-Hopson C."/>
            <person name="Hsuan V.W."/>
            <person name="Iida K."/>
            <person name="Karnes M."/>
            <person name="Khan S."/>
            <person name="Koesema E."/>
            <person name="Ishida J."/>
            <person name="Jiang P.X."/>
            <person name="Jones T."/>
            <person name="Kawai J."/>
            <person name="Kamiya A."/>
            <person name="Meyers C."/>
            <person name="Nakajima M."/>
            <person name="Narusaka M."/>
            <person name="Seki M."/>
            <person name="Sakurai T."/>
            <person name="Satou M."/>
            <person name="Tamse R."/>
            <person name="Vaysberg M."/>
            <person name="Wallender E.K."/>
            <person name="Wong C."/>
            <person name="Yamamura Y."/>
            <person name="Yuan S."/>
            <person name="Shinozaki K."/>
            <person name="Davis R.W."/>
            <person name="Theologis A."/>
            <person name="Ecker J.R."/>
        </authorList>
    </citation>
    <scope>NUCLEOTIDE SEQUENCE [LARGE SCALE MRNA]</scope>
    <source>
        <strain>cv. Columbia</strain>
    </source>
</reference>
<reference key="4">
    <citation type="journal article" date="2016" name="J. Biol. Chem.">
        <title>Cloning of glycerophosphocholine acyltransferase (GPCAT) from fungi and plants: a novel enzyme in phosphatidylcholine synthesis.</title>
        <authorList>
            <person name="Glab B."/>
            <person name="Beganovic M."/>
            <person name="Anaokar S."/>
            <person name="Hao M.S."/>
            <person name="Rasmusson A.G."/>
            <person name="Patton-Vogt J."/>
            <person name="Banas A."/>
            <person name="Stymne S."/>
            <person name="Lager I."/>
        </authorList>
    </citation>
    <scope>IDENTIFICATION</scope>
    <scope>FUNCTION</scope>
    <scope>CATALYTIC ACTIVITY</scope>
</reference>
<comment type="function">
    <text evidence="2">Glycerophosphocholine acyltransferase (GPCAT) that utilizes acyl-CoA to acylate glycero-3-phosphocholine (GPC), forming lysophosphatidylcholine (LPC) (PubMed:27758859). Shows broad acyl specificities with a preference for 16:0-CoA, polyunsaturated acyl-CoA, and the hydroxylated ricinoleoyl-CoA (PubMed:27758859). Also catalyzes the acylation of glycero-3-phosphoethanolamine (GPE) with acyl-CoA (PubMed:27758859). In addition to acyl-CoA, GPCAT efficiently utilizes LPC and lysophosphatidylethanolamine (LPE) as acyl donors in the acylation of GPC (PubMed:27758859). Contributes to the maintenance of phosphatidylcholine (PC) homeostasis and might also have specific functions in acyl editing of PC, such as transferring acyl groups modified at the sn-2 position of PC to the sn-1 (PubMed:27758859).</text>
</comment>
<comment type="catalytic activity">
    <reaction evidence="2">
        <text>sn-glycerol 3-phosphocholine + an acyl-CoA = a 1-acyl-sn-glycero-3-phosphocholine + CoA</text>
        <dbReference type="Rhea" id="RHEA:58476"/>
        <dbReference type="ChEBI" id="CHEBI:16870"/>
        <dbReference type="ChEBI" id="CHEBI:57287"/>
        <dbReference type="ChEBI" id="CHEBI:58168"/>
        <dbReference type="ChEBI" id="CHEBI:58342"/>
    </reaction>
    <physiologicalReaction direction="left-to-right" evidence="2">
        <dbReference type="Rhea" id="RHEA:58477"/>
    </physiologicalReaction>
</comment>
<comment type="catalytic activity">
    <reaction evidence="2">
        <text>sn-glycero-3-phosphoethanolamine + an acyl-CoA = a monoacyl-sn-glycero-3-phosphoethanolamine + CoA</text>
        <dbReference type="Rhea" id="RHEA:62108"/>
        <dbReference type="ChEBI" id="CHEBI:57287"/>
        <dbReference type="ChEBI" id="CHEBI:58342"/>
        <dbReference type="ChEBI" id="CHEBI:67274"/>
        <dbReference type="ChEBI" id="CHEBI:143890"/>
    </reaction>
    <physiologicalReaction direction="left-to-right" evidence="2">
        <dbReference type="Rhea" id="RHEA:62109"/>
    </physiologicalReaction>
</comment>
<comment type="catalytic activity">
    <reaction evidence="2">
        <text>sn-glycerol 3-phosphocholine + (9Z)-octadecenoyl-CoA = (9Z-octadecenoyl)-sn-glycero-3-phosphocholine + CoA</text>
        <dbReference type="Rhea" id="RHEA:56168"/>
        <dbReference type="ChEBI" id="CHEBI:16870"/>
        <dbReference type="ChEBI" id="CHEBI:57287"/>
        <dbReference type="ChEBI" id="CHEBI:57387"/>
        <dbReference type="ChEBI" id="CHEBI:76083"/>
    </reaction>
    <physiologicalReaction direction="left-to-right" evidence="2">
        <dbReference type="Rhea" id="RHEA:56169"/>
    </physiologicalReaction>
</comment>
<comment type="subcellular location">
    <subcellularLocation>
        <location evidence="1">Membrane</location>
        <topology evidence="1">Multi-pass membrane protein</topology>
    </subcellularLocation>
</comment>
<comment type="similarity">
    <text evidence="4">Belongs to the GPC1 family.</text>
</comment>
<protein>
    <recommendedName>
        <fullName evidence="3">Glycerophosphocholine acyltransferase 1</fullName>
        <shortName evidence="3">GPCAT</shortName>
        <ecNumber evidence="2">2.3.1.-</ecNumber>
    </recommendedName>
</protein>
<sequence length="381" mass="44697">MANNEDSNSNGLDSFDAVKQRFKDRSKKVVQTRELLSKQAVQTREILSKQAVKIAKQAEEHERFINKVTHLVGVLGFGGFCFLLGARPQDIPLVYCFFYVIFVPLRWIYYRFKKWHYYLLDFCYYANTIFLVDLLLYPKNEKLFMVCFSFAEGPLAWAIIVWRCSLVFSSPDKIVSVLIHLLPGLVFFTIRWWNPATFAAMHPVGTDRRVSWPYVEDKAYLFTWLFLVPLVVYTLWQVLYFLIVNVLRRQRLLRDPEVMTSYRELSKKAEKANNKLWQLSGLLGDQNRIWMYILFQAIFTVATMALTVPIFLSYRLHVIFQILKISAAVWNGGSFLLEVMPRQVIQKEKKKKAEMQPIEEQILHHEAVSHPTENEPKSTET</sequence>
<evidence type="ECO:0000255" key="1"/>
<evidence type="ECO:0000269" key="2">
    <source>
    </source>
</evidence>
<evidence type="ECO:0000303" key="3">
    <source>
    </source>
</evidence>
<evidence type="ECO:0000305" key="4"/>
<evidence type="ECO:0000312" key="5">
    <source>
        <dbReference type="Araport" id="AT5G35460"/>
    </source>
</evidence>
<evidence type="ECO:0000312" key="6">
    <source>
        <dbReference type="EMBL" id="BAB08704.1"/>
    </source>
</evidence>
<name>GPC1_ARATH</name>
<organism>
    <name type="scientific">Arabidopsis thaliana</name>
    <name type="common">Mouse-ear cress</name>
    <dbReference type="NCBI Taxonomy" id="3702"/>
    <lineage>
        <taxon>Eukaryota</taxon>
        <taxon>Viridiplantae</taxon>
        <taxon>Streptophyta</taxon>
        <taxon>Embryophyta</taxon>
        <taxon>Tracheophyta</taxon>
        <taxon>Spermatophyta</taxon>
        <taxon>Magnoliopsida</taxon>
        <taxon>eudicotyledons</taxon>
        <taxon>Gunneridae</taxon>
        <taxon>Pentapetalae</taxon>
        <taxon>rosids</taxon>
        <taxon>malvids</taxon>
        <taxon>Brassicales</taxon>
        <taxon>Brassicaceae</taxon>
        <taxon>Camelineae</taxon>
        <taxon>Arabidopsis</taxon>
    </lineage>
</organism>
<dbReference type="EC" id="2.3.1.-" evidence="2"/>
<dbReference type="EMBL" id="AB015477">
    <property type="protein sequence ID" value="BAB08704.1"/>
    <property type="molecule type" value="Genomic_DNA"/>
</dbReference>
<dbReference type="EMBL" id="CP002688">
    <property type="protein sequence ID" value="AED93969.1"/>
    <property type="molecule type" value="Genomic_DNA"/>
</dbReference>
<dbReference type="EMBL" id="CP002688">
    <property type="protein sequence ID" value="ANM69377.1"/>
    <property type="molecule type" value="Genomic_DNA"/>
</dbReference>
<dbReference type="EMBL" id="AY037213">
    <property type="protein sequence ID" value="AAK59798.1"/>
    <property type="molecule type" value="mRNA"/>
</dbReference>
<dbReference type="EMBL" id="BT003018">
    <property type="protein sequence ID" value="AAO23583.1"/>
    <property type="molecule type" value="mRNA"/>
</dbReference>
<dbReference type="RefSeq" id="NP_001318675.1">
    <property type="nucleotide sequence ID" value="NM_001344105.1"/>
</dbReference>
<dbReference type="RefSeq" id="NP_198396.1">
    <property type="nucleotide sequence ID" value="NM_122937.3"/>
</dbReference>
<dbReference type="SMR" id="Q9FJB4"/>
<dbReference type="FunCoup" id="Q9FJB4">
    <property type="interactions" value="308"/>
</dbReference>
<dbReference type="IntAct" id="Q9FJB4">
    <property type="interactions" value="51"/>
</dbReference>
<dbReference type="STRING" id="3702.Q9FJB4"/>
<dbReference type="SwissLipids" id="SLP:000001896"/>
<dbReference type="iPTMnet" id="Q9FJB4"/>
<dbReference type="PaxDb" id="3702-AT5G35460.1"/>
<dbReference type="ProteomicsDB" id="181606"/>
<dbReference type="EnsemblPlants" id="AT5G35460.1">
    <property type="protein sequence ID" value="AT5G35460.1"/>
    <property type="gene ID" value="AT5G35460"/>
</dbReference>
<dbReference type="EnsemblPlants" id="AT5G35460.2">
    <property type="protein sequence ID" value="AT5G35460.2"/>
    <property type="gene ID" value="AT5G35460"/>
</dbReference>
<dbReference type="GeneID" id="833509"/>
<dbReference type="Gramene" id="AT5G35460.1">
    <property type="protein sequence ID" value="AT5G35460.1"/>
    <property type="gene ID" value="AT5G35460"/>
</dbReference>
<dbReference type="Gramene" id="AT5G35460.2">
    <property type="protein sequence ID" value="AT5G35460.2"/>
    <property type="gene ID" value="AT5G35460"/>
</dbReference>
<dbReference type="KEGG" id="ath:AT5G35460"/>
<dbReference type="Araport" id="AT5G35460"/>
<dbReference type="TAIR" id="AT5G35460"/>
<dbReference type="eggNOG" id="KOG2895">
    <property type="taxonomic scope" value="Eukaryota"/>
</dbReference>
<dbReference type="HOGENOM" id="CLU_018994_3_1_1"/>
<dbReference type="InParanoid" id="Q9FJB4"/>
<dbReference type="OMA" id="WKRRVPT"/>
<dbReference type="OrthoDB" id="406287at2759"/>
<dbReference type="PhylomeDB" id="Q9FJB4"/>
<dbReference type="BRENDA" id="2.3.1.B36">
    <property type="organism ID" value="399"/>
</dbReference>
<dbReference type="PRO" id="PR:Q9FJB4"/>
<dbReference type="Proteomes" id="UP000006548">
    <property type="component" value="Chromosome 5"/>
</dbReference>
<dbReference type="ExpressionAtlas" id="Q9FJB4">
    <property type="expression patterns" value="baseline and differential"/>
</dbReference>
<dbReference type="GO" id="GO:0016020">
    <property type="term" value="C:membrane"/>
    <property type="evidence" value="ECO:0007669"/>
    <property type="project" value="UniProtKB-SubCell"/>
</dbReference>
<dbReference type="GO" id="GO:0009536">
    <property type="term" value="C:plastid"/>
    <property type="evidence" value="ECO:0007005"/>
    <property type="project" value="TAIR"/>
</dbReference>
<dbReference type="GO" id="GO:0106158">
    <property type="term" value="F:glycero-3-phosphocholine acyltransferase activity"/>
    <property type="evidence" value="ECO:0007669"/>
    <property type="project" value="RHEA"/>
</dbReference>
<dbReference type="GO" id="GO:0008654">
    <property type="term" value="P:phospholipid biosynthetic process"/>
    <property type="evidence" value="ECO:0007669"/>
    <property type="project" value="UniProtKB-KW"/>
</dbReference>
<dbReference type="InterPro" id="IPR021261">
    <property type="entry name" value="GPCAT"/>
</dbReference>
<dbReference type="PANTHER" id="PTHR31201:SF1">
    <property type="entry name" value="GLYCEROPHOSPHOCHOLINE ACYLTRANSFERASE 1"/>
    <property type="match status" value="1"/>
</dbReference>
<dbReference type="PANTHER" id="PTHR31201">
    <property type="entry name" value="OS01G0585100 PROTEIN"/>
    <property type="match status" value="1"/>
</dbReference>
<dbReference type="Pfam" id="PF10998">
    <property type="entry name" value="DUF2838"/>
    <property type="match status" value="1"/>
</dbReference>
<accession>Q9FJB4</accession>
<gene>
    <name evidence="3" type="primary">GPC1</name>
    <name evidence="5" type="ordered locus">At5g35460</name>
    <name evidence="6" type="ORF">MOK9.4</name>
</gene>
<feature type="chain" id="PRO_0000448643" description="Glycerophosphocholine acyltransferase 1">
    <location>
        <begin position="1"/>
        <end position="381"/>
    </location>
</feature>
<feature type="topological domain" description="Cytoplasmic" evidence="4">
    <location>
        <begin position="1"/>
        <end position="63"/>
    </location>
</feature>
<feature type="transmembrane region" description="Helical" evidence="1">
    <location>
        <begin position="64"/>
        <end position="84"/>
    </location>
</feature>
<feature type="topological domain" description="Lumenal" evidence="4">
    <location>
        <begin position="85"/>
        <end position="89"/>
    </location>
</feature>
<feature type="transmembrane region" description="Helical" evidence="1">
    <location>
        <begin position="90"/>
        <end position="110"/>
    </location>
</feature>
<feature type="topological domain" description="Cytoplasmic" evidence="4">
    <location>
        <begin position="111"/>
        <end position="116"/>
    </location>
</feature>
<feature type="transmembrane region" description="Helical" evidence="1">
    <location>
        <begin position="117"/>
        <end position="137"/>
    </location>
</feature>
<feature type="topological domain" description="Lumenal" evidence="4">
    <location>
        <begin position="138"/>
        <end position="141"/>
    </location>
</feature>
<feature type="transmembrane region" description="Helical" evidence="1">
    <location>
        <begin position="142"/>
        <end position="162"/>
    </location>
</feature>
<feature type="topological domain" description="Cytoplasmic" evidence="4">
    <location>
        <begin position="163"/>
        <end position="173"/>
    </location>
</feature>
<feature type="transmembrane region" description="Helical" evidence="1">
    <location>
        <begin position="174"/>
        <end position="194"/>
    </location>
</feature>
<feature type="topological domain" description="Lumenal" evidence="4">
    <location>
        <begin position="195"/>
        <end position="223"/>
    </location>
</feature>
<feature type="transmembrane region" description="Helical" evidence="1">
    <location>
        <begin position="224"/>
        <end position="244"/>
    </location>
</feature>
<feature type="topological domain" description="Cytoplasmic" evidence="4">
    <location>
        <begin position="245"/>
        <end position="291"/>
    </location>
</feature>
<feature type="transmembrane region" description="Helical" evidence="1">
    <location>
        <begin position="292"/>
        <end position="312"/>
    </location>
</feature>
<feature type="topological domain" description="Lumenal" evidence="4">
    <location>
        <begin position="313"/>
        <end position="315"/>
    </location>
</feature>
<feature type="transmembrane region" description="Helical" evidence="1">
    <location>
        <begin position="316"/>
        <end position="336"/>
    </location>
</feature>
<feature type="topological domain" description="Cytoplasmic" evidence="4">
    <location>
        <begin position="337"/>
        <end position="381"/>
    </location>
</feature>